<organism>
    <name type="scientific">Desulfitobacterium hafniense (strain Y51)</name>
    <dbReference type="NCBI Taxonomy" id="138119"/>
    <lineage>
        <taxon>Bacteria</taxon>
        <taxon>Bacillati</taxon>
        <taxon>Bacillota</taxon>
        <taxon>Clostridia</taxon>
        <taxon>Eubacteriales</taxon>
        <taxon>Desulfitobacteriaceae</taxon>
        <taxon>Desulfitobacterium</taxon>
    </lineage>
</organism>
<comment type="function">
    <text evidence="1">The RuvA-RuvB-RuvC complex processes Holliday junction (HJ) DNA during genetic recombination and DNA repair. Endonuclease that resolves HJ intermediates. Cleaves cruciform DNA by making single-stranded nicks across the HJ at symmetrical positions within the homologous arms, yielding a 5'-phosphate and a 3'-hydroxyl group; requires a central core of homology in the junction. The consensus cleavage sequence is 5'-(A/T)TT(C/G)-3'. Cleavage occurs on the 3'-side of the TT dinucleotide at the point of strand exchange. HJ branch migration catalyzed by RuvA-RuvB allows RuvC to scan DNA until it finds its consensus sequence, where it cleaves and resolves the cruciform DNA.</text>
</comment>
<comment type="catalytic activity">
    <reaction evidence="1">
        <text>Endonucleolytic cleavage at a junction such as a reciprocal single-stranded crossover between two homologous DNA duplexes (Holliday junction).</text>
        <dbReference type="EC" id="3.1.21.10"/>
    </reaction>
</comment>
<comment type="cofactor">
    <cofactor evidence="1">
        <name>Mg(2+)</name>
        <dbReference type="ChEBI" id="CHEBI:18420"/>
    </cofactor>
    <text evidence="1">Binds 2 Mg(2+) ion per subunit.</text>
</comment>
<comment type="subunit">
    <text evidence="1">Homodimer which binds Holliday junction (HJ) DNA. The HJ becomes 2-fold symmetrical on binding to RuvC with unstacked arms; it has a different conformation from HJ DNA in complex with RuvA. In the full resolvosome a probable DNA-RuvA(4)-RuvB(12)-RuvC(2) complex forms which resolves the HJ.</text>
</comment>
<comment type="subcellular location">
    <subcellularLocation>
        <location evidence="1">Cytoplasm</location>
    </subcellularLocation>
</comment>
<comment type="similarity">
    <text evidence="1">Belongs to the RuvC family.</text>
</comment>
<protein>
    <recommendedName>
        <fullName evidence="1">Crossover junction endodeoxyribonuclease RuvC</fullName>
        <ecNumber evidence="1">3.1.21.10</ecNumber>
    </recommendedName>
    <alternativeName>
        <fullName evidence="1">Holliday junction nuclease RuvC</fullName>
    </alternativeName>
    <alternativeName>
        <fullName evidence="1">Holliday junction resolvase RuvC</fullName>
    </alternativeName>
</protein>
<keyword id="KW-0963">Cytoplasm</keyword>
<keyword id="KW-0227">DNA damage</keyword>
<keyword id="KW-0233">DNA recombination</keyword>
<keyword id="KW-0234">DNA repair</keyword>
<keyword id="KW-0238">DNA-binding</keyword>
<keyword id="KW-0255">Endonuclease</keyword>
<keyword id="KW-0378">Hydrolase</keyword>
<keyword id="KW-0460">Magnesium</keyword>
<keyword id="KW-0479">Metal-binding</keyword>
<keyword id="KW-0540">Nuclease</keyword>
<keyword id="KW-1185">Reference proteome</keyword>
<gene>
    <name evidence="1" type="primary">ruvC</name>
    <name type="ordered locus">DSY2468</name>
</gene>
<proteinExistence type="inferred from homology"/>
<reference key="1">
    <citation type="journal article" date="2006" name="J. Bacteriol.">
        <title>Complete genome sequence of the dehalorespiring bacterium Desulfitobacterium hafniense Y51 and comparison with Dehalococcoides ethenogenes 195.</title>
        <authorList>
            <person name="Nonaka H."/>
            <person name="Keresztes G."/>
            <person name="Shinoda Y."/>
            <person name="Ikenaga Y."/>
            <person name="Abe M."/>
            <person name="Naito K."/>
            <person name="Inatomi K."/>
            <person name="Furukawa K."/>
            <person name="Inui M."/>
            <person name="Yukawa H."/>
        </authorList>
    </citation>
    <scope>NUCLEOTIDE SEQUENCE [LARGE SCALE GENOMIC DNA]</scope>
    <source>
        <strain>Y51</strain>
    </source>
</reference>
<dbReference type="EC" id="3.1.21.10" evidence="1"/>
<dbReference type="EMBL" id="AP008230">
    <property type="protein sequence ID" value="BAE84257.1"/>
    <property type="molecule type" value="Genomic_DNA"/>
</dbReference>
<dbReference type="RefSeq" id="WP_005810732.1">
    <property type="nucleotide sequence ID" value="NC_007907.1"/>
</dbReference>
<dbReference type="SMR" id="Q24UN5"/>
<dbReference type="STRING" id="138119.DSY2468"/>
<dbReference type="KEGG" id="dsy:DSY2468"/>
<dbReference type="eggNOG" id="COG0817">
    <property type="taxonomic scope" value="Bacteria"/>
</dbReference>
<dbReference type="HOGENOM" id="CLU_091257_3_1_9"/>
<dbReference type="Proteomes" id="UP000001946">
    <property type="component" value="Chromosome"/>
</dbReference>
<dbReference type="GO" id="GO:0005737">
    <property type="term" value="C:cytoplasm"/>
    <property type="evidence" value="ECO:0007669"/>
    <property type="project" value="UniProtKB-SubCell"/>
</dbReference>
<dbReference type="GO" id="GO:0048476">
    <property type="term" value="C:Holliday junction resolvase complex"/>
    <property type="evidence" value="ECO:0007669"/>
    <property type="project" value="UniProtKB-UniRule"/>
</dbReference>
<dbReference type="GO" id="GO:0008821">
    <property type="term" value="F:crossover junction DNA endonuclease activity"/>
    <property type="evidence" value="ECO:0007669"/>
    <property type="project" value="UniProtKB-UniRule"/>
</dbReference>
<dbReference type="GO" id="GO:0003677">
    <property type="term" value="F:DNA binding"/>
    <property type="evidence" value="ECO:0007669"/>
    <property type="project" value="UniProtKB-KW"/>
</dbReference>
<dbReference type="GO" id="GO:0000287">
    <property type="term" value="F:magnesium ion binding"/>
    <property type="evidence" value="ECO:0007669"/>
    <property type="project" value="UniProtKB-UniRule"/>
</dbReference>
<dbReference type="GO" id="GO:0006310">
    <property type="term" value="P:DNA recombination"/>
    <property type="evidence" value="ECO:0007669"/>
    <property type="project" value="UniProtKB-UniRule"/>
</dbReference>
<dbReference type="GO" id="GO:0006281">
    <property type="term" value="P:DNA repair"/>
    <property type="evidence" value="ECO:0007669"/>
    <property type="project" value="UniProtKB-UniRule"/>
</dbReference>
<dbReference type="CDD" id="cd16962">
    <property type="entry name" value="RuvC"/>
    <property type="match status" value="1"/>
</dbReference>
<dbReference type="FunFam" id="3.30.420.10:FF:000002">
    <property type="entry name" value="Crossover junction endodeoxyribonuclease RuvC"/>
    <property type="match status" value="1"/>
</dbReference>
<dbReference type="Gene3D" id="3.30.420.10">
    <property type="entry name" value="Ribonuclease H-like superfamily/Ribonuclease H"/>
    <property type="match status" value="1"/>
</dbReference>
<dbReference type="HAMAP" id="MF_00034">
    <property type="entry name" value="RuvC"/>
    <property type="match status" value="1"/>
</dbReference>
<dbReference type="InterPro" id="IPR012337">
    <property type="entry name" value="RNaseH-like_sf"/>
</dbReference>
<dbReference type="InterPro" id="IPR036397">
    <property type="entry name" value="RNaseH_sf"/>
</dbReference>
<dbReference type="InterPro" id="IPR020563">
    <property type="entry name" value="X-over_junc_endoDNase_Mg_BS"/>
</dbReference>
<dbReference type="InterPro" id="IPR002176">
    <property type="entry name" value="X-over_junc_endoDNase_RuvC"/>
</dbReference>
<dbReference type="NCBIfam" id="NF000711">
    <property type="entry name" value="PRK00039.2-1"/>
    <property type="match status" value="1"/>
</dbReference>
<dbReference type="NCBIfam" id="TIGR00228">
    <property type="entry name" value="ruvC"/>
    <property type="match status" value="1"/>
</dbReference>
<dbReference type="PANTHER" id="PTHR30194">
    <property type="entry name" value="CROSSOVER JUNCTION ENDODEOXYRIBONUCLEASE RUVC"/>
    <property type="match status" value="1"/>
</dbReference>
<dbReference type="PANTHER" id="PTHR30194:SF3">
    <property type="entry name" value="CROSSOVER JUNCTION ENDODEOXYRIBONUCLEASE RUVC"/>
    <property type="match status" value="1"/>
</dbReference>
<dbReference type="Pfam" id="PF02075">
    <property type="entry name" value="RuvC"/>
    <property type="match status" value="1"/>
</dbReference>
<dbReference type="PRINTS" id="PR00696">
    <property type="entry name" value="RSOLVASERUVC"/>
</dbReference>
<dbReference type="SUPFAM" id="SSF53098">
    <property type="entry name" value="Ribonuclease H-like"/>
    <property type="match status" value="1"/>
</dbReference>
<dbReference type="PROSITE" id="PS01321">
    <property type="entry name" value="RUVC"/>
    <property type="match status" value="1"/>
</dbReference>
<evidence type="ECO:0000255" key="1">
    <source>
        <dbReference type="HAMAP-Rule" id="MF_00034"/>
    </source>
</evidence>
<feature type="chain" id="PRO_1000002748" description="Crossover junction endodeoxyribonuclease RuvC">
    <location>
        <begin position="1"/>
        <end position="165"/>
    </location>
</feature>
<feature type="active site" evidence="1">
    <location>
        <position position="7"/>
    </location>
</feature>
<feature type="active site" evidence="1">
    <location>
        <position position="67"/>
    </location>
</feature>
<feature type="active site" evidence="1">
    <location>
        <position position="140"/>
    </location>
</feature>
<feature type="binding site" evidence="1">
    <location>
        <position position="7"/>
    </location>
    <ligand>
        <name>Mg(2+)</name>
        <dbReference type="ChEBI" id="CHEBI:18420"/>
        <label>1</label>
    </ligand>
</feature>
<feature type="binding site" evidence="1">
    <location>
        <position position="67"/>
    </location>
    <ligand>
        <name>Mg(2+)</name>
        <dbReference type="ChEBI" id="CHEBI:18420"/>
        <label>2</label>
    </ligand>
</feature>
<feature type="binding site" evidence="1">
    <location>
        <position position="140"/>
    </location>
    <ligand>
        <name>Mg(2+)</name>
        <dbReference type="ChEBI" id="CHEBI:18420"/>
        <label>1</label>
    </ligand>
</feature>
<sequence>MLILGIDPGTAIMGYGLIEKKGNRLFPVDYACWRTPAHTPMPERLLMLYHEIEAYIKEKQPHHVAVEELFFNRNTTTAISVGQARGVVLLAAAQCGLPVYEYTPLQVKQAVAGYGRADKQQIQQMVRALLGLQEIPKPDDTADALAIAICHAHSVNLLNRMGGAL</sequence>
<name>RUVC_DESHY</name>
<accession>Q24UN5</accession>